<protein>
    <recommendedName>
        <fullName evidence="1">Periplasmic nitrate reductase</fullName>
        <ecNumber evidence="1">1.9.6.1</ecNumber>
    </recommendedName>
</protein>
<feature type="signal peptide" description="Tat-type signal" evidence="1">
    <location>
        <begin position="1"/>
        <end position="30"/>
    </location>
</feature>
<feature type="chain" id="PRO_0000256073" description="Periplasmic nitrate reductase" evidence="1">
    <location>
        <begin position="31"/>
        <end position="830"/>
    </location>
</feature>
<feature type="domain" description="4Fe-4S Mo/W bis-MGD-type" evidence="1">
    <location>
        <begin position="40"/>
        <end position="96"/>
    </location>
</feature>
<feature type="binding site" evidence="1">
    <location>
        <position position="47"/>
    </location>
    <ligand>
        <name>[4Fe-4S] cluster</name>
        <dbReference type="ChEBI" id="CHEBI:49883"/>
    </ligand>
</feature>
<feature type="binding site" evidence="1">
    <location>
        <position position="50"/>
    </location>
    <ligand>
        <name>[4Fe-4S] cluster</name>
        <dbReference type="ChEBI" id="CHEBI:49883"/>
    </ligand>
</feature>
<feature type="binding site" evidence="1">
    <location>
        <position position="54"/>
    </location>
    <ligand>
        <name>[4Fe-4S] cluster</name>
        <dbReference type="ChEBI" id="CHEBI:49883"/>
    </ligand>
</feature>
<feature type="binding site" evidence="1">
    <location>
        <position position="82"/>
    </location>
    <ligand>
        <name>[4Fe-4S] cluster</name>
        <dbReference type="ChEBI" id="CHEBI:49883"/>
    </ligand>
</feature>
<feature type="binding site" evidence="1">
    <location>
        <position position="84"/>
    </location>
    <ligand>
        <name>Mo-bis(molybdopterin guanine dinucleotide)</name>
        <dbReference type="ChEBI" id="CHEBI:60539"/>
    </ligand>
</feature>
<feature type="binding site" evidence="1">
    <location>
        <position position="151"/>
    </location>
    <ligand>
        <name>Mo-bis(molybdopterin guanine dinucleotide)</name>
        <dbReference type="ChEBI" id="CHEBI:60539"/>
    </ligand>
</feature>
<feature type="binding site" evidence="1">
    <location>
        <position position="176"/>
    </location>
    <ligand>
        <name>Mo-bis(molybdopterin guanine dinucleotide)</name>
        <dbReference type="ChEBI" id="CHEBI:60539"/>
    </ligand>
</feature>
<feature type="binding site" evidence="1">
    <location>
        <position position="180"/>
    </location>
    <ligand>
        <name>Mo-bis(molybdopterin guanine dinucleotide)</name>
        <dbReference type="ChEBI" id="CHEBI:60539"/>
    </ligand>
</feature>
<feature type="binding site" evidence="1">
    <location>
        <begin position="213"/>
        <end position="220"/>
    </location>
    <ligand>
        <name>Mo-bis(molybdopterin guanine dinucleotide)</name>
        <dbReference type="ChEBI" id="CHEBI:60539"/>
    </ligand>
</feature>
<feature type="binding site" evidence="1">
    <location>
        <begin position="244"/>
        <end position="248"/>
    </location>
    <ligand>
        <name>Mo-bis(molybdopterin guanine dinucleotide)</name>
        <dbReference type="ChEBI" id="CHEBI:60539"/>
    </ligand>
</feature>
<feature type="binding site" evidence="1">
    <location>
        <position position="374"/>
    </location>
    <ligand>
        <name>Mo-bis(molybdopterin guanine dinucleotide)</name>
        <dbReference type="ChEBI" id="CHEBI:60539"/>
    </ligand>
</feature>
<feature type="binding site" evidence="1">
    <location>
        <position position="378"/>
    </location>
    <ligand>
        <name>Mo-bis(molybdopterin guanine dinucleotide)</name>
        <dbReference type="ChEBI" id="CHEBI:60539"/>
    </ligand>
</feature>
<feature type="binding site" evidence="1">
    <location>
        <position position="484"/>
    </location>
    <ligand>
        <name>Mo-bis(molybdopterin guanine dinucleotide)</name>
        <dbReference type="ChEBI" id="CHEBI:60539"/>
    </ligand>
</feature>
<feature type="binding site" evidence="1">
    <location>
        <begin position="510"/>
        <end position="511"/>
    </location>
    <ligand>
        <name>Mo-bis(molybdopterin guanine dinucleotide)</name>
        <dbReference type="ChEBI" id="CHEBI:60539"/>
    </ligand>
</feature>
<feature type="binding site" evidence="1">
    <location>
        <position position="533"/>
    </location>
    <ligand>
        <name>Mo-bis(molybdopterin guanine dinucleotide)</name>
        <dbReference type="ChEBI" id="CHEBI:60539"/>
    </ligand>
</feature>
<feature type="binding site" evidence="1">
    <location>
        <position position="560"/>
    </location>
    <ligand>
        <name>Mo-bis(molybdopterin guanine dinucleotide)</name>
        <dbReference type="ChEBI" id="CHEBI:60539"/>
    </ligand>
</feature>
<feature type="binding site" evidence="1">
    <location>
        <begin position="720"/>
        <end position="729"/>
    </location>
    <ligand>
        <name>Mo-bis(molybdopterin guanine dinucleotide)</name>
        <dbReference type="ChEBI" id="CHEBI:60539"/>
    </ligand>
</feature>
<feature type="binding site" evidence="1">
    <location>
        <position position="796"/>
    </location>
    <ligand>
        <name>substrate</name>
    </ligand>
</feature>
<feature type="binding site" evidence="1">
    <location>
        <position position="804"/>
    </location>
    <ligand>
        <name>Mo-bis(molybdopterin guanine dinucleotide)</name>
        <dbReference type="ChEBI" id="CHEBI:60539"/>
    </ligand>
</feature>
<feature type="binding site" evidence="1">
    <location>
        <position position="821"/>
    </location>
    <ligand>
        <name>Mo-bis(molybdopterin guanine dinucleotide)</name>
        <dbReference type="ChEBI" id="CHEBI:60539"/>
    </ligand>
</feature>
<name>NAPA_HAHCH</name>
<reference key="1">
    <citation type="journal article" date="2005" name="Nucleic Acids Res.">
        <title>Genomic blueprint of Hahella chejuensis, a marine microbe producing an algicidal agent.</title>
        <authorList>
            <person name="Jeong H."/>
            <person name="Yim J.H."/>
            <person name="Lee C."/>
            <person name="Choi S.-H."/>
            <person name="Park Y.K."/>
            <person name="Yoon S.H."/>
            <person name="Hur C.-G."/>
            <person name="Kang H.-Y."/>
            <person name="Kim D."/>
            <person name="Lee H.H."/>
            <person name="Park K.H."/>
            <person name="Park S.-H."/>
            <person name="Park H.-S."/>
            <person name="Lee H.K."/>
            <person name="Oh T.K."/>
            <person name="Kim J.F."/>
        </authorList>
    </citation>
    <scope>NUCLEOTIDE SEQUENCE [LARGE SCALE GENOMIC DNA]</scope>
    <source>
        <strain>KCTC 2396</strain>
    </source>
</reference>
<sequence>MTTRREFIKRSAAVTAACTAGISLSGEASNVITDSEYTRLKWSKAPCRFCGTGCSVNVAVKDNQVVATHGDIQSEVNRGLNCVKGYFLSKIMYGKDRLTQPLLRKKNGEYHKDGDFTPVTWDEAFDVMAKQFKKTLKEKGPTAVGMFGSGQWTVWEGYAAVKLYKAGFRSNNIDPNARHCMASAVAGFMRTFGIDEPMGCYDDIEHADAFVLWGSNMAEMHPILWTRVTDRRLSHPHVKVAVLSTFQHRCFDLADLPIIFTPQADLAILNYIARYIIEKDMVNWDFVNKHVRFKVGAADIGYGLRPEHQLELAAANASNPGGAKDSSFEEYKNFLQQYDAQFVSKLSGASKEKLDQLAELYANPKTRVTSFWTMGFNQHTRGVWCNNLVYNLHLLTGKISSPGNSPFSLTGQPSACGTAREVGTFAHRLPADMVVTNPKHPEFAEKTWKIPPGVIPDKPGYHAVLQNRKLRDGELNAYWVQVNNNVQAAPNMLEETLPGYRNPNNFIVVSEAYPTVTSQAADLILPAAMWVEKEGAYGNAERRTQFWRQLVSAPGEAKSDLWQIMEFSKRFTTDEVWPEEILSKSPEFKGKSLFDVLFANNSVNKYSIEEIDPNYKNHESEHFGFYVQKGLFEEYAIFGRGHGHDLAEFDRYHEARGLRWPVVDGKETLWRFREGSDPYVKKGAGYQFYGHSDGKAIIFALPYEPPAESPDQDYPYWLVTGRVLEHWHSGSMTQRVPELYLAVPDALVYMHPDDARKLGVRRGDEIKVVSRRGEMRSRVETRGRNKPPVGLVFVPWFDASQLINKCTLDATDPISKQTDFKKCAVKLIKV</sequence>
<gene>
    <name evidence="1" type="primary">napA</name>
    <name type="ordered locus">HCH_03364</name>
</gene>
<dbReference type="EC" id="1.9.6.1" evidence="1"/>
<dbReference type="EMBL" id="CP000155">
    <property type="protein sequence ID" value="ABC30117.1"/>
    <property type="molecule type" value="Genomic_DNA"/>
</dbReference>
<dbReference type="RefSeq" id="WP_011397186.1">
    <property type="nucleotide sequence ID" value="NC_007645.1"/>
</dbReference>
<dbReference type="SMR" id="Q2SGV7"/>
<dbReference type="STRING" id="349521.HCH_03364"/>
<dbReference type="KEGG" id="hch:HCH_03364"/>
<dbReference type="eggNOG" id="COG0243">
    <property type="taxonomic scope" value="Bacteria"/>
</dbReference>
<dbReference type="HOGENOM" id="CLU_000422_13_4_6"/>
<dbReference type="OrthoDB" id="9810782at2"/>
<dbReference type="Proteomes" id="UP000000238">
    <property type="component" value="Chromosome"/>
</dbReference>
<dbReference type="GO" id="GO:0016020">
    <property type="term" value="C:membrane"/>
    <property type="evidence" value="ECO:0007669"/>
    <property type="project" value="TreeGrafter"/>
</dbReference>
<dbReference type="GO" id="GO:0009325">
    <property type="term" value="C:nitrate reductase complex"/>
    <property type="evidence" value="ECO:0007669"/>
    <property type="project" value="TreeGrafter"/>
</dbReference>
<dbReference type="GO" id="GO:0042597">
    <property type="term" value="C:periplasmic space"/>
    <property type="evidence" value="ECO:0007669"/>
    <property type="project" value="UniProtKB-SubCell"/>
</dbReference>
<dbReference type="GO" id="GO:0051539">
    <property type="term" value="F:4 iron, 4 sulfur cluster binding"/>
    <property type="evidence" value="ECO:0007669"/>
    <property type="project" value="UniProtKB-KW"/>
</dbReference>
<dbReference type="GO" id="GO:0009055">
    <property type="term" value="F:electron transfer activity"/>
    <property type="evidence" value="ECO:0007669"/>
    <property type="project" value="UniProtKB-UniRule"/>
</dbReference>
<dbReference type="GO" id="GO:0005506">
    <property type="term" value="F:iron ion binding"/>
    <property type="evidence" value="ECO:0007669"/>
    <property type="project" value="UniProtKB-UniRule"/>
</dbReference>
<dbReference type="GO" id="GO:0030151">
    <property type="term" value="F:molybdenum ion binding"/>
    <property type="evidence" value="ECO:0007669"/>
    <property type="project" value="InterPro"/>
</dbReference>
<dbReference type="GO" id="GO:0043546">
    <property type="term" value="F:molybdopterin cofactor binding"/>
    <property type="evidence" value="ECO:0007669"/>
    <property type="project" value="InterPro"/>
</dbReference>
<dbReference type="GO" id="GO:0050140">
    <property type="term" value="F:nitrate reductase (cytochrome) activity"/>
    <property type="evidence" value="ECO:0007669"/>
    <property type="project" value="UniProtKB-EC"/>
</dbReference>
<dbReference type="GO" id="GO:0045333">
    <property type="term" value="P:cellular respiration"/>
    <property type="evidence" value="ECO:0007669"/>
    <property type="project" value="UniProtKB-ARBA"/>
</dbReference>
<dbReference type="GO" id="GO:0006777">
    <property type="term" value="P:Mo-molybdopterin cofactor biosynthetic process"/>
    <property type="evidence" value="ECO:0007669"/>
    <property type="project" value="UniProtKB-UniRule"/>
</dbReference>
<dbReference type="GO" id="GO:0042128">
    <property type="term" value="P:nitrate assimilation"/>
    <property type="evidence" value="ECO:0007669"/>
    <property type="project" value="UniProtKB-UniRule"/>
</dbReference>
<dbReference type="CDD" id="cd02791">
    <property type="entry name" value="MopB_CT_Nitrate-R-NapA-like"/>
    <property type="match status" value="1"/>
</dbReference>
<dbReference type="CDD" id="cd02754">
    <property type="entry name" value="MopB_Nitrate-R-NapA-like"/>
    <property type="match status" value="1"/>
</dbReference>
<dbReference type="FunFam" id="2.40.40.20:FF:000005">
    <property type="entry name" value="Periplasmic nitrate reductase"/>
    <property type="match status" value="1"/>
</dbReference>
<dbReference type="Gene3D" id="2.40.40.20">
    <property type="match status" value="1"/>
</dbReference>
<dbReference type="Gene3D" id="3.30.200.210">
    <property type="match status" value="1"/>
</dbReference>
<dbReference type="Gene3D" id="3.40.50.740">
    <property type="match status" value="1"/>
</dbReference>
<dbReference type="Gene3D" id="3.40.228.10">
    <property type="entry name" value="Dimethylsulfoxide Reductase, domain 2"/>
    <property type="match status" value="1"/>
</dbReference>
<dbReference type="HAMAP" id="MF_01630">
    <property type="entry name" value="Nitrate_reduct_NapA"/>
    <property type="match status" value="1"/>
</dbReference>
<dbReference type="InterPro" id="IPR009010">
    <property type="entry name" value="Asp_de-COase-like_dom_sf"/>
</dbReference>
<dbReference type="InterPro" id="IPR041957">
    <property type="entry name" value="CT_Nitrate-R-NapA-like"/>
</dbReference>
<dbReference type="InterPro" id="IPR006657">
    <property type="entry name" value="MoPterin_dinucl-bd_dom"/>
</dbReference>
<dbReference type="InterPro" id="IPR006656">
    <property type="entry name" value="Mopterin_OxRdtase"/>
</dbReference>
<dbReference type="InterPro" id="IPR006963">
    <property type="entry name" value="Mopterin_OxRdtase_4Fe-4S_dom"/>
</dbReference>
<dbReference type="InterPro" id="IPR027467">
    <property type="entry name" value="MopterinOxRdtase_cofactor_BS"/>
</dbReference>
<dbReference type="InterPro" id="IPR010051">
    <property type="entry name" value="Periplasm_NO3_reductase_lsu"/>
</dbReference>
<dbReference type="InterPro" id="IPR050123">
    <property type="entry name" value="Prok_molybdopt-oxidoreductase"/>
</dbReference>
<dbReference type="InterPro" id="IPR006311">
    <property type="entry name" value="TAT_signal"/>
</dbReference>
<dbReference type="InterPro" id="IPR019546">
    <property type="entry name" value="TAT_signal_bac_arc"/>
</dbReference>
<dbReference type="NCBIfam" id="TIGR01706">
    <property type="entry name" value="NAPA"/>
    <property type="match status" value="1"/>
</dbReference>
<dbReference type="NCBIfam" id="NF010055">
    <property type="entry name" value="PRK13532.1"/>
    <property type="match status" value="1"/>
</dbReference>
<dbReference type="NCBIfam" id="TIGR01409">
    <property type="entry name" value="TAT_signal_seq"/>
    <property type="match status" value="1"/>
</dbReference>
<dbReference type="PANTHER" id="PTHR43105:SF11">
    <property type="entry name" value="PERIPLASMIC NITRATE REDUCTASE"/>
    <property type="match status" value="1"/>
</dbReference>
<dbReference type="PANTHER" id="PTHR43105">
    <property type="entry name" value="RESPIRATORY NITRATE REDUCTASE"/>
    <property type="match status" value="1"/>
</dbReference>
<dbReference type="Pfam" id="PF04879">
    <property type="entry name" value="Molybdop_Fe4S4"/>
    <property type="match status" value="1"/>
</dbReference>
<dbReference type="Pfam" id="PF00384">
    <property type="entry name" value="Molybdopterin"/>
    <property type="match status" value="1"/>
</dbReference>
<dbReference type="Pfam" id="PF01568">
    <property type="entry name" value="Molydop_binding"/>
    <property type="match status" value="1"/>
</dbReference>
<dbReference type="SMART" id="SM00926">
    <property type="entry name" value="Molybdop_Fe4S4"/>
    <property type="match status" value="1"/>
</dbReference>
<dbReference type="SUPFAM" id="SSF50692">
    <property type="entry name" value="ADC-like"/>
    <property type="match status" value="1"/>
</dbReference>
<dbReference type="SUPFAM" id="SSF53706">
    <property type="entry name" value="Formate dehydrogenase/DMSO reductase, domains 1-3"/>
    <property type="match status" value="1"/>
</dbReference>
<dbReference type="PROSITE" id="PS51669">
    <property type="entry name" value="4FE4S_MOW_BIS_MGD"/>
    <property type="match status" value="1"/>
</dbReference>
<dbReference type="PROSITE" id="PS00551">
    <property type="entry name" value="MOLYBDOPTERIN_PROK_1"/>
    <property type="match status" value="1"/>
</dbReference>
<dbReference type="PROSITE" id="PS51318">
    <property type="entry name" value="TAT"/>
    <property type="match status" value="1"/>
</dbReference>
<comment type="function">
    <text evidence="1">Catalytic subunit of the periplasmic nitrate reductase complex NapAB. Receives electrons from NapB and catalyzes the reduction of nitrate to nitrite.</text>
</comment>
<comment type="catalytic activity">
    <reaction evidence="1">
        <text>2 Fe(II)-[cytochrome] + nitrate + 2 H(+) = 2 Fe(III)-[cytochrome] + nitrite + H2O</text>
        <dbReference type="Rhea" id="RHEA:12909"/>
        <dbReference type="Rhea" id="RHEA-COMP:11777"/>
        <dbReference type="Rhea" id="RHEA-COMP:11778"/>
        <dbReference type="ChEBI" id="CHEBI:15377"/>
        <dbReference type="ChEBI" id="CHEBI:15378"/>
        <dbReference type="ChEBI" id="CHEBI:16301"/>
        <dbReference type="ChEBI" id="CHEBI:17632"/>
        <dbReference type="ChEBI" id="CHEBI:29033"/>
        <dbReference type="ChEBI" id="CHEBI:29034"/>
        <dbReference type="EC" id="1.9.6.1"/>
    </reaction>
</comment>
<comment type="cofactor">
    <cofactor evidence="1">
        <name>[4Fe-4S] cluster</name>
        <dbReference type="ChEBI" id="CHEBI:49883"/>
    </cofactor>
    <text evidence="1">Binds 1 [4Fe-4S] cluster.</text>
</comment>
<comment type="cofactor">
    <cofactor evidence="1">
        <name>Mo-bis(molybdopterin guanine dinucleotide)</name>
        <dbReference type="ChEBI" id="CHEBI:60539"/>
    </cofactor>
    <text evidence="1">Binds 1 molybdenum-bis(molybdopterin guanine dinucleotide) (Mo-bis-MGD) cofactor per subunit.</text>
</comment>
<comment type="subunit">
    <text evidence="1">Component of the periplasmic nitrate reductase NapAB complex composed of NapA and NapB.</text>
</comment>
<comment type="subcellular location">
    <subcellularLocation>
        <location evidence="1">Periplasm</location>
    </subcellularLocation>
</comment>
<comment type="PTM">
    <text evidence="1">Predicted to be exported by the Tat system. The position of the signal peptide cleavage has not been experimentally proven.</text>
</comment>
<comment type="similarity">
    <text evidence="1">Belongs to the prokaryotic molybdopterin-containing oxidoreductase family. NasA/NapA/NarB subfamily.</text>
</comment>
<organism>
    <name type="scientific">Hahella chejuensis (strain KCTC 2396)</name>
    <dbReference type="NCBI Taxonomy" id="349521"/>
    <lineage>
        <taxon>Bacteria</taxon>
        <taxon>Pseudomonadati</taxon>
        <taxon>Pseudomonadota</taxon>
        <taxon>Gammaproteobacteria</taxon>
        <taxon>Oceanospirillales</taxon>
        <taxon>Hahellaceae</taxon>
        <taxon>Hahella</taxon>
    </lineage>
</organism>
<proteinExistence type="inferred from homology"/>
<keyword id="KW-0004">4Fe-4S</keyword>
<keyword id="KW-0249">Electron transport</keyword>
<keyword id="KW-0408">Iron</keyword>
<keyword id="KW-0411">Iron-sulfur</keyword>
<keyword id="KW-0479">Metal-binding</keyword>
<keyword id="KW-0500">Molybdenum</keyword>
<keyword id="KW-0534">Nitrate assimilation</keyword>
<keyword id="KW-0560">Oxidoreductase</keyword>
<keyword id="KW-0574">Periplasm</keyword>
<keyword id="KW-1185">Reference proteome</keyword>
<keyword id="KW-0732">Signal</keyword>
<keyword id="KW-0813">Transport</keyword>
<accession>Q2SGV7</accession>
<evidence type="ECO:0000255" key="1">
    <source>
        <dbReference type="HAMAP-Rule" id="MF_01630"/>
    </source>
</evidence>